<organism>
    <name type="scientific">Rattus norvegicus</name>
    <name type="common">Rat</name>
    <dbReference type="NCBI Taxonomy" id="10116"/>
    <lineage>
        <taxon>Eukaryota</taxon>
        <taxon>Metazoa</taxon>
        <taxon>Chordata</taxon>
        <taxon>Craniata</taxon>
        <taxon>Vertebrata</taxon>
        <taxon>Euteleostomi</taxon>
        <taxon>Mammalia</taxon>
        <taxon>Eutheria</taxon>
        <taxon>Euarchontoglires</taxon>
        <taxon>Glires</taxon>
        <taxon>Rodentia</taxon>
        <taxon>Myomorpha</taxon>
        <taxon>Muroidea</taxon>
        <taxon>Muridae</taxon>
        <taxon>Murinae</taxon>
        <taxon>Rattus</taxon>
    </lineage>
</organism>
<comment type="function">
    <text evidence="2 3">The small GTPases Rab are key regulators of intracellular membrane trafficking, from the formation of transport vesicles to their fusion with membranes. Rabs cycle between an inactive GDP-bound form and an active GTP-bound form that is able to recruit to membranes different sets of downstream effectors directly responsible for vesicle formation, movement, tethering and fusion. RAB4A is involved in protein transport. Also plays a role in vesicular traffic. Mediates VEGFR2 endosomal trafficking to enhance VEGFR2 signaling (By similarity). Acts as a regulator of platelet alpha-granule release during activation and aggregation of platelets (By similarity).</text>
</comment>
<comment type="catalytic activity">
    <reaction evidence="2">
        <text>GTP + H2O = GDP + phosphate + H(+)</text>
        <dbReference type="Rhea" id="RHEA:19669"/>
        <dbReference type="ChEBI" id="CHEBI:15377"/>
        <dbReference type="ChEBI" id="CHEBI:15378"/>
        <dbReference type="ChEBI" id="CHEBI:37565"/>
        <dbReference type="ChEBI" id="CHEBI:43474"/>
        <dbReference type="ChEBI" id="CHEBI:58189"/>
        <dbReference type="EC" id="3.6.5.2"/>
    </reaction>
    <physiologicalReaction direction="left-to-right" evidence="2">
        <dbReference type="Rhea" id="RHEA:19670"/>
    </physiologicalReaction>
</comment>
<comment type="cofactor">
    <cofactor evidence="2">
        <name>Mg(2+)</name>
        <dbReference type="ChEBI" id="CHEBI:18420"/>
    </cofactor>
</comment>
<comment type="activity regulation">
    <text evidence="7">Regulated by guanine nucleotide exchange factors (GEFs) which promote the exchange of bound GDP for free GTP. Regulated by GTPase activating proteins (GAPs) which increase the GTP hydrolysis activity. Inhibited by GDP dissociation inhibitors (GDIs).</text>
</comment>
<comment type="subunit">
    <text evidence="2 3 6">Interacts with SGSM1, SGSM2 and SGSM3 (By similarity). Interacts with RAB11FIP1, RABEP1, ZFYVE20 and RUFY1. Interacts (membrane-bound form) with NDRG1; the interaction involves NDRG1 in vesicular recycling of E-cadherin. Interacts (in GTP-bound form) with GRIPAP1 (via N-terminus) (PubMed:20098723). Interacts with RABEP1 and RBSN (By similarity). Does not interact with HPS4 (By similarity). Interacts with RABEP2; this interaction may mediate VEGFR2 cell surface expression (By similarity).</text>
</comment>
<comment type="interaction">
    <interactant intactId="EBI-9029299">
        <id>P05714</id>
    </interactant>
    <interactant intactId="EBI-2688731">
        <id>Q9Y2I1</id>
        <label>NISCH</label>
    </interactant>
    <organismsDiffer>true</organismsDiffer>
    <experiments>3</experiments>
</comment>
<comment type="subcellular location">
    <subcellularLocation>
        <location evidence="2">Membrane</location>
        <topology evidence="2">Peripheral membrane protein</topology>
    </subcellularLocation>
    <subcellularLocation>
        <location evidence="2">Cytoplasm</location>
    </subcellularLocation>
    <subcellularLocation>
        <location evidence="6">Early endosome membrane</location>
        <topology evidence="7">Peripheral membrane protein</topology>
    </subcellularLocation>
    <subcellularLocation>
        <location evidence="6">Recycling endosome membrane</location>
        <topology evidence="7">Peripheral membrane protein</topology>
    </subcellularLocation>
    <text evidence="2">Generally associated with membranes. Cytoplasmic when phosphorylated by CDK1.</text>
</comment>
<comment type="domain">
    <text evidence="5">Switch 1, switch 2 and the interswitch regions are characteristic of Rab GTPases and mediate the interactions with Rab downstream effectors. The switch regions undergo conformational changes upon nucleotide binding which drives interaction with specific sets of effector proteins, with most effectors only binding to GTP-bound Rab.</text>
</comment>
<comment type="PTM">
    <text evidence="3">Serotonylation of Gln-72 by TGM2 during activation and aggregation of platelets leads to constitutive activation of GTPase activity.</text>
</comment>
<comment type="PTM">
    <text evidence="2">Phosphorylated by CDK1 kinase during mitosis.</text>
</comment>
<comment type="similarity">
    <text evidence="7">Belongs to the small GTPase superfamily. Rab family.</text>
</comment>
<comment type="sequence caution" evidence="7">
    <conflict type="frameshift">
        <sequence resource="EMBL-CDS" id="CAA30006"/>
    </conflict>
</comment>
<evidence type="ECO:0000250" key="1"/>
<evidence type="ECO:0000250" key="2">
    <source>
        <dbReference type="UniProtKB" id="P20338"/>
    </source>
</evidence>
<evidence type="ECO:0000250" key="3">
    <source>
        <dbReference type="UniProtKB" id="P56371"/>
    </source>
</evidence>
<evidence type="ECO:0000250" key="4">
    <source>
        <dbReference type="UniProtKB" id="P61018"/>
    </source>
</evidence>
<evidence type="ECO:0000250" key="5">
    <source>
        <dbReference type="UniProtKB" id="P61106"/>
    </source>
</evidence>
<evidence type="ECO:0000269" key="6">
    <source>
    </source>
</evidence>
<evidence type="ECO:0000305" key="7"/>
<evidence type="ECO:0000312" key="8">
    <source>
        <dbReference type="RGD" id="3529"/>
    </source>
</evidence>
<dbReference type="EC" id="3.6.5.2" evidence="2"/>
<dbReference type="EMBL" id="X06890">
    <property type="protein sequence ID" value="CAA30006.1"/>
    <property type="status" value="ALT_FRAME"/>
    <property type="molecule type" value="mRNA"/>
</dbReference>
<dbReference type="EMBL" id="BC062016">
    <property type="protein sequence ID" value="AAH62016.1"/>
    <property type="molecule type" value="mRNA"/>
</dbReference>
<dbReference type="PIR" id="S01766">
    <property type="entry name" value="S01766"/>
</dbReference>
<dbReference type="RefSeq" id="NP_037151.2">
    <property type="nucleotide sequence ID" value="NM_013019.2"/>
</dbReference>
<dbReference type="SMR" id="P05714"/>
<dbReference type="FunCoup" id="P05714">
    <property type="interactions" value="1886"/>
</dbReference>
<dbReference type="IntAct" id="P05714">
    <property type="interactions" value="1"/>
</dbReference>
<dbReference type="MINT" id="P05714"/>
<dbReference type="STRING" id="10116.ENSRNOP00000048878"/>
<dbReference type="PhosphoSitePlus" id="P05714"/>
<dbReference type="jPOST" id="P05714"/>
<dbReference type="PaxDb" id="10116-ENSRNOP00000048878"/>
<dbReference type="DNASU" id="25532"/>
<dbReference type="Ensembl" id="ENSRNOT00000049337.6">
    <property type="protein sequence ID" value="ENSRNOP00000048878.4"/>
    <property type="gene ID" value="ENSRNOG00000017467.8"/>
</dbReference>
<dbReference type="GeneID" id="25532"/>
<dbReference type="KEGG" id="rno:25532"/>
<dbReference type="UCSC" id="RGD:3529">
    <property type="organism name" value="rat"/>
</dbReference>
<dbReference type="AGR" id="RGD:3529"/>
<dbReference type="CTD" id="5867"/>
<dbReference type="RGD" id="3529">
    <property type="gene designation" value="Rab4a"/>
</dbReference>
<dbReference type="eggNOG" id="KOG0086">
    <property type="taxonomic scope" value="Eukaryota"/>
</dbReference>
<dbReference type="GeneTree" id="ENSGT00940000157464"/>
<dbReference type="HOGENOM" id="CLU_041217_23_1_1"/>
<dbReference type="InParanoid" id="P05714"/>
<dbReference type="OrthoDB" id="7244at9989"/>
<dbReference type="TreeFam" id="TF300032"/>
<dbReference type="Reactome" id="R-RNO-1660499">
    <property type="pathway name" value="Synthesis of PIPs at the plasma membrane"/>
</dbReference>
<dbReference type="Reactome" id="R-RNO-8854214">
    <property type="pathway name" value="TBC/RABGAPs"/>
</dbReference>
<dbReference type="Reactome" id="R-RNO-8873719">
    <property type="pathway name" value="RAB geranylgeranylation"/>
</dbReference>
<dbReference type="Reactome" id="R-RNO-8875656">
    <property type="pathway name" value="MET receptor recycling"/>
</dbReference>
<dbReference type="PRO" id="PR:P05714"/>
<dbReference type="Proteomes" id="UP000002494">
    <property type="component" value="Chromosome 19"/>
</dbReference>
<dbReference type="Bgee" id="ENSRNOG00000017467">
    <property type="expression patterns" value="Expressed in cerebellum and 20 other cell types or tissues"/>
</dbReference>
<dbReference type="GO" id="GO:0005737">
    <property type="term" value="C:cytoplasm"/>
    <property type="evidence" value="ECO:0000266"/>
    <property type="project" value="RGD"/>
</dbReference>
<dbReference type="GO" id="GO:0031901">
    <property type="term" value="C:early endosome membrane"/>
    <property type="evidence" value="ECO:0007669"/>
    <property type="project" value="UniProtKB-SubCell"/>
</dbReference>
<dbReference type="GO" id="GO:0005768">
    <property type="term" value="C:endosome"/>
    <property type="evidence" value="ECO:0000266"/>
    <property type="project" value="RGD"/>
</dbReference>
<dbReference type="GO" id="GO:0070062">
    <property type="term" value="C:extracellular exosome"/>
    <property type="evidence" value="ECO:0000266"/>
    <property type="project" value="RGD"/>
</dbReference>
<dbReference type="GO" id="GO:0098978">
    <property type="term" value="C:glutamatergic synapse"/>
    <property type="evidence" value="ECO:0000266"/>
    <property type="project" value="RGD"/>
</dbReference>
<dbReference type="GO" id="GO:0032593">
    <property type="term" value="C:insulin-responsive compartment"/>
    <property type="evidence" value="ECO:0000314"/>
    <property type="project" value="RGD"/>
</dbReference>
<dbReference type="GO" id="GO:0048471">
    <property type="term" value="C:perinuclear region of cytoplasm"/>
    <property type="evidence" value="ECO:0000266"/>
    <property type="project" value="RGD"/>
</dbReference>
<dbReference type="GO" id="GO:0055037">
    <property type="term" value="C:recycling endosome"/>
    <property type="evidence" value="ECO:0000314"/>
    <property type="project" value="MGI"/>
</dbReference>
<dbReference type="GO" id="GO:0055038">
    <property type="term" value="C:recycling endosome membrane"/>
    <property type="evidence" value="ECO:0007669"/>
    <property type="project" value="UniProtKB-SubCell"/>
</dbReference>
<dbReference type="GO" id="GO:0030672">
    <property type="term" value="C:synaptic vesicle membrane"/>
    <property type="evidence" value="ECO:0000314"/>
    <property type="project" value="SynGO"/>
</dbReference>
<dbReference type="GO" id="GO:0031982">
    <property type="term" value="C:vesicle"/>
    <property type="evidence" value="ECO:0000266"/>
    <property type="project" value="RGD"/>
</dbReference>
<dbReference type="GO" id="GO:0001671">
    <property type="term" value="F:ATPase activator activity"/>
    <property type="evidence" value="ECO:0000314"/>
    <property type="project" value="RGD"/>
</dbReference>
<dbReference type="GO" id="GO:0051117">
    <property type="term" value="F:ATPase binding"/>
    <property type="evidence" value="ECO:0000353"/>
    <property type="project" value="RGD"/>
</dbReference>
<dbReference type="GO" id="GO:0003925">
    <property type="term" value="F:G protein activity"/>
    <property type="evidence" value="ECO:0007669"/>
    <property type="project" value="UniProtKB-EC"/>
</dbReference>
<dbReference type="GO" id="GO:0019003">
    <property type="term" value="F:GDP binding"/>
    <property type="evidence" value="ECO:0000250"/>
    <property type="project" value="UniProtKB"/>
</dbReference>
<dbReference type="GO" id="GO:0005525">
    <property type="term" value="F:GTP binding"/>
    <property type="evidence" value="ECO:0000314"/>
    <property type="project" value="RGD"/>
</dbReference>
<dbReference type="GO" id="GO:0003924">
    <property type="term" value="F:GTPase activity"/>
    <property type="evidence" value="ECO:0000314"/>
    <property type="project" value="RGD"/>
</dbReference>
<dbReference type="GO" id="GO:0035255">
    <property type="term" value="F:ionotropic glutamate receptor binding"/>
    <property type="evidence" value="ECO:0000353"/>
    <property type="project" value="RGD"/>
</dbReference>
<dbReference type="GO" id="GO:0019905">
    <property type="term" value="F:syntaxin binding"/>
    <property type="evidence" value="ECO:0000353"/>
    <property type="project" value="RGD"/>
</dbReference>
<dbReference type="GO" id="GO:0019882">
    <property type="term" value="P:antigen processing and presentation"/>
    <property type="evidence" value="ECO:0000266"/>
    <property type="project" value="RGD"/>
</dbReference>
<dbReference type="GO" id="GO:0098968">
    <property type="term" value="P:neurotransmitter receptor transport postsynaptic membrane to endosome"/>
    <property type="evidence" value="ECO:0000266"/>
    <property type="project" value="RGD"/>
</dbReference>
<dbReference type="GO" id="GO:0015031">
    <property type="term" value="P:protein transport"/>
    <property type="evidence" value="ECO:0000266"/>
    <property type="project" value="RGD"/>
</dbReference>
<dbReference type="GO" id="GO:0032482">
    <property type="term" value="P:Rab protein signal transduction"/>
    <property type="evidence" value="ECO:0000315"/>
    <property type="project" value="RGD"/>
</dbReference>
<dbReference type="GO" id="GO:0030100">
    <property type="term" value="P:regulation of endocytosis"/>
    <property type="evidence" value="ECO:0000266"/>
    <property type="project" value="RGD"/>
</dbReference>
<dbReference type="GO" id="GO:0007264">
    <property type="term" value="P:small GTPase-mediated signal transduction"/>
    <property type="evidence" value="ECO:0000266"/>
    <property type="project" value="RGD"/>
</dbReference>
<dbReference type="GO" id="GO:0016192">
    <property type="term" value="P:vesicle-mediated transport"/>
    <property type="evidence" value="ECO:0000318"/>
    <property type="project" value="GO_Central"/>
</dbReference>
<dbReference type="GO" id="GO:0099003">
    <property type="term" value="P:vesicle-mediated transport in synapse"/>
    <property type="evidence" value="ECO:0000266"/>
    <property type="project" value="RGD"/>
</dbReference>
<dbReference type="CDD" id="cd04113">
    <property type="entry name" value="Rab4"/>
    <property type="match status" value="1"/>
</dbReference>
<dbReference type="FunFam" id="3.40.50.300:FF:000280">
    <property type="entry name" value="Putative ras-related protein Rab-4B"/>
    <property type="match status" value="1"/>
</dbReference>
<dbReference type="Gene3D" id="3.40.50.300">
    <property type="entry name" value="P-loop containing nucleotide triphosphate hydrolases"/>
    <property type="match status" value="1"/>
</dbReference>
<dbReference type="InterPro" id="IPR027417">
    <property type="entry name" value="P-loop_NTPase"/>
</dbReference>
<dbReference type="InterPro" id="IPR041819">
    <property type="entry name" value="Rab4"/>
</dbReference>
<dbReference type="InterPro" id="IPR050209">
    <property type="entry name" value="Rab_GTPases_membrane_traffic"/>
</dbReference>
<dbReference type="InterPro" id="IPR005225">
    <property type="entry name" value="Small_GTP-bd"/>
</dbReference>
<dbReference type="InterPro" id="IPR001806">
    <property type="entry name" value="Small_GTPase"/>
</dbReference>
<dbReference type="NCBIfam" id="TIGR00231">
    <property type="entry name" value="small_GTP"/>
    <property type="match status" value="1"/>
</dbReference>
<dbReference type="PANTHER" id="PTHR47979">
    <property type="entry name" value="DRAB11-RELATED"/>
    <property type="match status" value="1"/>
</dbReference>
<dbReference type="Pfam" id="PF00071">
    <property type="entry name" value="Ras"/>
    <property type="match status" value="1"/>
</dbReference>
<dbReference type="PRINTS" id="PR00449">
    <property type="entry name" value="RASTRNSFRMNG"/>
</dbReference>
<dbReference type="SMART" id="SM00177">
    <property type="entry name" value="ARF"/>
    <property type="match status" value="1"/>
</dbReference>
<dbReference type="SMART" id="SM00175">
    <property type="entry name" value="RAB"/>
    <property type="match status" value="1"/>
</dbReference>
<dbReference type="SMART" id="SM00176">
    <property type="entry name" value="RAN"/>
    <property type="match status" value="1"/>
</dbReference>
<dbReference type="SMART" id="SM00173">
    <property type="entry name" value="RAS"/>
    <property type="match status" value="1"/>
</dbReference>
<dbReference type="SMART" id="SM00174">
    <property type="entry name" value="RHO"/>
    <property type="match status" value="1"/>
</dbReference>
<dbReference type="SUPFAM" id="SSF52540">
    <property type="entry name" value="P-loop containing nucleoside triphosphate hydrolases"/>
    <property type="match status" value="1"/>
</dbReference>
<dbReference type="PROSITE" id="PS51419">
    <property type="entry name" value="RAB"/>
    <property type="match status" value="1"/>
</dbReference>
<proteinExistence type="evidence at protein level"/>
<keyword id="KW-0963">Cytoplasm</keyword>
<keyword id="KW-0967">Endosome</keyword>
<keyword id="KW-0342">GTP-binding</keyword>
<keyword id="KW-0378">Hydrolase</keyword>
<keyword id="KW-0449">Lipoprotein</keyword>
<keyword id="KW-0460">Magnesium</keyword>
<keyword id="KW-0472">Membrane</keyword>
<keyword id="KW-0479">Metal-binding</keyword>
<keyword id="KW-0488">Methylation</keyword>
<keyword id="KW-0547">Nucleotide-binding</keyword>
<keyword id="KW-0597">Phosphoprotein</keyword>
<keyword id="KW-0636">Prenylation</keyword>
<keyword id="KW-0653">Protein transport</keyword>
<keyword id="KW-1185">Reference proteome</keyword>
<keyword id="KW-0813">Transport</keyword>
<reference key="1">
    <citation type="journal article" date="1988" name="Nucleic Acids Res.">
        <title>Complete coding sequences of the ras related rab 3 and 4 cDNAs.</title>
        <authorList>
            <person name="Zahraoui A."/>
            <person name="Touchot N."/>
            <person name="Chardin P."/>
            <person name="Tavitian A."/>
        </authorList>
    </citation>
    <scope>NUCLEOTIDE SEQUENCE [MRNA]</scope>
    <source>
        <tissue>Brain</tissue>
    </source>
</reference>
<reference key="2">
    <citation type="journal article" date="2004" name="Genome Res.">
        <title>The status, quality, and expansion of the NIH full-length cDNA project: the Mammalian Gene Collection (MGC).</title>
        <authorList>
            <consortium name="The MGC Project Team"/>
        </authorList>
    </citation>
    <scope>NUCLEOTIDE SEQUENCE [LARGE SCALE MRNA]</scope>
    <source>
        <tissue>Prostate</tissue>
    </source>
</reference>
<reference key="3">
    <citation type="journal article" date="2010" name="PLoS Biol.">
        <title>Neuron specific Rab4 effector GRASP-1 coordinates membrane specialization and maturation of recycling endosomes.</title>
        <authorList>
            <person name="Hoogenraad C.C."/>
            <person name="Popa I."/>
            <person name="Futai K."/>
            <person name="Martinez-Sanchez E."/>
            <person name="Sanchez-Martinez E."/>
            <person name="Wulf P.S."/>
            <person name="van Vlijmen T."/>
            <person name="Dortland B.R."/>
            <person name="Oorschot V."/>
            <person name="Govers R."/>
            <person name="Monti M."/>
            <person name="Heck A.J."/>
            <person name="Sheng M."/>
            <person name="Klumperman J."/>
            <person name="Rehmann H."/>
            <person name="Jaarsma D."/>
            <person name="Kapitein L.C."/>
            <person name="van der Sluijs P."/>
        </authorList>
    </citation>
    <scope>INTERACTION WITH GRIPAP1</scope>
    <scope>SUBCELLULAR LOCATION</scope>
</reference>
<feature type="chain" id="PRO_0000121095" description="Ras-related protein Rab-4A">
    <location>
        <begin position="1"/>
        <end position="218"/>
    </location>
</feature>
<feature type="short sequence motif" description="Switch 1" evidence="5">
    <location>
        <begin position="44"/>
        <end position="49"/>
    </location>
</feature>
<feature type="short sequence motif" description="Switch 2" evidence="5">
    <location>
        <begin position="70"/>
        <end position="79"/>
    </location>
</feature>
<feature type="binding site" evidence="2">
    <location>
        <position position="23"/>
    </location>
    <ligand>
        <name>GTP</name>
        <dbReference type="ChEBI" id="CHEBI:37565"/>
    </ligand>
</feature>
<feature type="binding site" evidence="2">
    <location>
        <position position="24"/>
    </location>
    <ligand>
        <name>GTP</name>
        <dbReference type="ChEBI" id="CHEBI:37565"/>
    </ligand>
</feature>
<feature type="binding site" evidence="2">
    <location>
        <position position="25"/>
    </location>
    <ligand>
        <name>GTP</name>
        <dbReference type="ChEBI" id="CHEBI:37565"/>
    </ligand>
</feature>
<feature type="binding site" evidence="2">
    <location>
        <position position="26"/>
    </location>
    <ligand>
        <name>GTP</name>
        <dbReference type="ChEBI" id="CHEBI:37565"/>
    </ligand>
</feature>
<feature type="binding site" evidence="2">
    <location>
        <position position="27"/>
    </location>
    <ligand>
        <name>GTP</name>
        <dbReference type="ChEBI" id="CHEBI:37565"/>
    </ligand>
</feature>
<feature type="binding site" evidence="2">
    <location>
        <position position="27"/>
    </location>
    <ligand>
        <name>Mg(2+)</name>
        <dbReference type="ChEBI" id="CHEBI:18420"/>
    </ligand>
</feature>
<feature type="binding site" evidence="2">
    <location>
        <position position="28"/>
    </location>
    <ligand>
        <name>GTP</name>
        <dbReference type="ChEBI" id="CHEBI:37565"/>
    </ligand>
</feature>
<feature type="binding site" evidence="2">
    <location>
        <position position="42"/>
    </location>
    <ligand>
        <name>GTP</name>
        <dbReference type="ChEBI" id="CHEBI:37565"/>
    </ligand>
</feature>
<feature type="binding site" evidence="2">
    <location>
        <position position="44"/>
    </location>
    <ligand>
        <name>GTP</name>
        <dbReference type="ChEBI" id="CHEBI:37565"/>
    </ligand>
</feature>
<feature type="binding site" evidence="2">
    <location>
        <position position="45"/>
    </location>
    <ligand>
        <name>GTP</name>
        <dbReference type="ChEBI" id="CHEBI:37565"/>
    </ligand>
</feature>
<feature type="binding site" evidence="2">
    <location>
        <position position="45"/>
    </location>
    <ligand>
        <name>Mg(2+)</name>
        <dbReference type="ChEBI" id="CHEBI:18420"/>
    </ligand>
</feature>
<feature type="binding site" evidence="4">
    <location>
        <position position="68"/>
    </location>
    <ligand>
        <name>Mg(2+)</name>
        <dbReference type="ChEBI" id="CHEBI:18420"/>
    </ligand>
</feature>
<feature type="binding site" evidence="2">
    <location>
        <position position="71"/>
    </location>
    <ligand>
        <name>GTP</name>
        <dbReference type="ChEBI" id="CHEBI:37565"/>
    </ligand>
</feature>
<feature type="binding site" evidence="2">
    <location>
        <position position="126"/>
    </location>
    <ligand>
        <name>GTP</name>
        <dbReference type="ChEBI" id="CHEBI:37565"/>
    </ligand>
</feature>
<feature type="binding site" evidence="2">
    <location>
        <position position="127"/>
    </location>
    <ligand>
        <name>GTP</name>
        <dbReference type="ChEBI" id="CHEBI:37565"/>
    </ligand>
</feature>
<feature type="binding site" evidence="2">
    <location>
        <position position="129"/>
    </location>
    <ligand>
        <name>GTP</name>
        <dbReference type="ChEBI" id="CHEBI:37565"/>
    </ligand>
</feature>
<feature type="binding site" evidence="2">
    <location>
        <position position="157"/>
    </location>
    <ligand>
        <name>GTP</name>
        <dbReference type="ChEBI" id="CHEBI:37565"/>
    </ligand>
</feature>
<feature type="binding site" evidence="2">
    <location>
        <position position="158"/>
    </location>
    <ligand>
        <name>GTP</name>
        <dbReference type="ChEBI" id="CHEBI:37565"/>
    </ligand>
</feature>
<feature type="modified residue" description="5-glutamyl serotonin" evidence="3">
    <location>
        <position position="72"/>
    </location>
</feature>
<feature type="modified residue" description="Phosphoserine" evidence="2">
    <location>
        <position position="190"/>
    </location>
</feature>
<feature type="modified residue" description="Phosphoserine; by CDK1" evidence="2">
    <location>
        <position position="204"/>
    </location>
</feature>
<feature type="modified residue" description="Cysteine methyl ester" evidence="1">
    <location>
        <position position="218"/>
    </location>
</feature>
<feature type="lipid moiety-binding region" description="S-geranylgeranyl cysteine" evidence="1">
    <location>
        <position position="216"/>
    </location>
</feature>
<feature type="lipid moiety-binding region" description="S-geranylgeranyl cysteine" evidence="1">
    <location>
        <position position="218"/>
    </location>
</feature>
<feature type="sequence conflict" description="In Ref. 1; CAA30006." evidence="7" ref="1">
    <original>S</original>
    <variation>Q</variation>
    <location>
        <position position="52"/>
    </location>
</feature>
<feature type="sequence conflict" description="In Ref. 1; CAA30006." evidence="7" ref="1">
    <original>R</original>
    <variation>T</variation>
    <location>
        <position position="80"/>
    </location>
</feature>
<feature type="sequence conflict" description="In Ref. 1; CAA30006." evidence="7" ref="1">
    <original>A</original>
    <variation>P</variation>
    <location>
        <position position="157"/>
    </location>
</feature>
<sequence length="218" mass="24409">MAQTAMSETYDFLFKFLVIGNAGTGKSCLLHQFIEKKFKDDSNHTIGVEFGSKIINVGGKYVKLQIWDTAGQERFRSVTRSYYRGAAGALLVYDITSRETYNALTNWLTDARMLASQNIVIILCGNKKDLDADREVTFLEASRFAQENELMFLETSALTGENVEEAFMQCARKILNKIESGELDPERMGSGIQYGDAALRQLRSPRRTQAPSAQECGC</sequence>
<accession>P05714</accession>
<accession>Q6P6U4</accession>
<name>RAB4A_RAT</name>
<gene>
    <name evidence="8" type="primary">Rab4a</name>
    <name type="synonym">Rab4</name>
</gene>
<protein>
    <recommendedName>
        <fullName>Ras-related protein Rab-4A</fullName>
        <ecNumber evidence="2">3.6.5.2</ecNumber>
    </recommendedName>
</protein>